<evidence type="ECO:0000250" key="1"/>
<evidence type="ECO:0000305" key="2"/>
<feature type="chain" id="PRO_0000020959" description="Coagulin chain A">
    <location>
        <begin position="1"/>
        <end position="18"/>
    </location>
</feature>
<feature type="peptide" id="PRO_0000020960" description="Peptide C">
    <location>
        <begin position="19"/>
        <end position="46"/>
    </location>
</feature>
<feature type="chain" id="PRO_0000020961" description="Coagulin chain B">
    <location>
        <begin position="47"/>
        <end position="175"/>
    </location>
</feature>
<feature type="disulfide bond" description="Interchain (between A and B chains)" evidence="1">
    <location>
        <begin position="8"/>
        <end position="167"/>
    </location>
</feature>
<feature type="disulfide bond" description="Interchain (between A and B chains)" evidence="1">
    <location>
        <begin position="10"/>
        <end position="95"/>
    </location>
</feature>
<feature type="disulfide bond" evidence="1">
    <location>
        <begin position="60"/>
        <end position="161"/>
    </location>
</feature>
<feature type="disulfide bond" evidence="1">
    <location>
        <begin position="65"/>
        <end position="121"/>
    </location>
</feature>
<feature type="disulfide bond" evidence="1">
    <location>
        <begin position="75"/>
        <end position="168"/>
    </location>
</feature>
<feature type="disulfide bond" evidence="1">
    <location>
        <begin position="88"/>
        <end position="140"/>
    </location>
</feature>
<feature type="disulfide bond" evidence="1">
    <location>
        <begin position="127"/>
        <end position="170"/>
    </location>
</feature>
<feature type="disulfide bond" evidence="1">
    <location>
        <begin position="134"/>
        <end position="172"/>
    </location>
</feature>
<sequence length="175" mass="19771">DDTNAPLCLCDEPGILGRKEFVSDATKTIIEKAVEEVAKEGGVSGRGFSLFSHHPVFRECGKYECRTVRPEHSRCYNFPPFIHFKSECPVSTRDCEPVFGYTAAGEFRVIVQAPRAGFRQCVWQHKCRYGSNNCGFNGRCTQQRSVVRLVTFNLEKNGFLCETFRTCCGCPCRSF</sequence>
<proteinExistence type="evidence at protein level"/>
<keyword id="KW-0903">Direct protein sequencing</keyword>
<keyword id="KW-1015">Disulfide bond</keyword>
<keyword id="KW-0353">Hemolymph clotting</keyword>
<keyword id="KW-0964">Secreted</keyword>
<reference key="1">
    <citation type="journal article" date="1984" name="J. Biochem.">
        <title>The amino acid sequence of coagulogen isolated from southeast Asian horseshoe crab, Tachypleus gigas.</title>
        <authorList>
            <person name="Miyata T."/>
            <person name="Usui K."/>
            <person name="Iwanaga S."/>
        </authorList>
    </citation>
    <scope>PROTEIN SEQUENCE</scope>
</reference>
<name>COAG_TACGI</name>
<accession>P15566</accession>
<organism>
    <name type="scientific">Tachypleus gigas</name>
    <name type="common">Southeast Asian horseshoe crab</name>
    <dbReference type="NCBI Taxonomy" id="6852"/>
    <lineage>
        <taxon>Eukaryota</taxon>
        <taxon>Metazoa</taxon>
        <taxon>Ecdysozoa</taxon>
        <taxon>Arthropoda</taxon>
        <taxon>Chelicerata</taxon>
        <taxon>Merostomata</taxon>
        <taxon>Xiphosura</taxon>
        <taxon>Limulidae</taxon>
        <taxon>Tachypleus</taxon>
    </lineage>
</organism>
<comment type="function">
    <text>Coagulogen is a gel-forming protein of hemolymph; it hinders the spread of invaders by immobilizing them.</text>
</comment>
<comment type="subunit">
    <text>Coagulogen is cleaved after Arg-18 and Arg-46 by a clotting enzyme contained in the hemocyte and activated by a bacterial endotoxin (lipopolysaccharide). This cleavage releases the peptide C and leaves 2 chains of coagulin, A and B, linked by two disulfide bonds. Coagulin molecules interlink to form a gel.</text>
</comment>
<comment type="subcellular location">
    <subcellularLocation>
        <location>Secreted</location>
    </subcellularLocation>
</comment>
<comment type="tissue specificity">
    <text>Hemolymph.</text>
</comment>
<comment type="similarity">
    <text evidence="2">Belongs to the coagulin family.</text>
</comment>
<dbReference type="PIR" id="A28851">
    <property type="entry name" value="A28851"/>
</dbReference>
<dbReference type="SMR" id="P15566"/>
<dbReference type="GO" id="GO:0005576">
    <property type="term" value="C:extracellular region"/>
    <property type="evidence" value="ECO:0007669"/>
    <property type="project" value="UniProtKB-SubCell"/>
</dbReference>
<dbReference type="GO" id="GO:0042381">
    <property type="term" value="P:hemolymph coagulation"/>
    <property type="evidence" value="ECO:0007669"/>
    <property type="project" value="UniProtKB-KW"/>
</dbReference>
<dbReference type="Gene3D" id="2.10.90.10">
    <property type="entry name" value="Cystine-knot cytokines"/>
    <property type="match status" value="1"/>
</dbReference>
<dbReference type="InterPro" id="IPR000275">
    <property type="entry name" value="Coagulin"/>
</dbReference>
<dbReference type="InterPro" id="IPR029034">
    <property type="entry name" value="Cystine-knot_cytokine"/>
</dbReference>
<dbReference type="Pfam" id="PF02035">
    <property type="entry name" value="Coagulin"/>
    <property type="match status" value="1"/>
</dbReference>
<dbReference type="PIRSF" id="PIRSF002379">
    <property type="entry name" value="Coagulogen"/>
    <property type="match status" value="1"/>
</dbReference>
<dbReference type="PRINTS" id="PR00763">
    <property type="entry name" value="COAGULIN"/>
</dbReference>
<dbReference type="SUPFAM" id="SSF57501">
    <property type="entry name" value="Cystine-knot cytokines"/>
    <property type="match status" value="1"/>
</dbReference>
<protein>
    <recommendedName>
        <fullName>Coagulogen</fullName>
    </recommendedName>
    <component>
        <recommendedName>
            <fullName>Coagulin chain A</fullName>
        </recommendedName>
    </component>
    <component>
        <recommendedName>
            <fullName>Peptide C</fullName>
        </recommendedName>
    </component>
    <component>
        <recommendedName>
            <fullName>Coagulin chain B</fullName>
        </recommendedName>
    </component>
</protein>